<evidence type="ECO:0000250" key="1"/>
<evidence type="ECO:0000255" key="2"/>
<evidence type="ECO:0000305" key="3"/>
<gene>
    <name type="primary">NUF2</name>
    <name type="ordered locus">AEL015W</name>
</gene>
<reference key="1">
    <citation type="journal article" date="2004" name="Science">
        <title>The Ashbya gossypii genome as a tool for mapping the ancient Saccharomyces cerevisiae genome.</title>
        <authorList>
            <person name="Dietrich F.S."/>
            <person name="Voegeli S."/>
            <person name="Brachat S."/>
            <person name="Lerch A."/>
            <person name="Gates K."/>
            <person name="Steiner S."/>
            <person name="Mohr C."/>
            <person name="Poehlmann R."/>
            <person name="Luedi P."/>
            <person name="Choi S."/>
            <person name="Wing R.A."/>
            <person name="Flavier A."/>
            <person name="Gaffney T.D."/>
            <person name="Philippsen P."/>
        </authorList>
    </citation>
    <scope>NUCLEOTIDE SEQUENCE [LARGE SCALE GENOMIC DNA]</scope>
    <source>
        <strain>ATCC 10895 / CBS 109.51 / FGSC 9923 / NRRL Y-1056</strain>
    </source>
</reference>
<reference key="2">
    <citation type="journal article" date="2013" name="G3 (Bethesda)">
        <title>Genomes of Ashbya fungi isolated from insects reveal four mating-type loci, numerous translocations, lack of transposons, and distinct gene duplications.</title>
        <authorList>
            <person name="Dietrich F.S."/>
            <person name="Voegeli S."/>
            <person name="Kuo S."/>
            <person name="Philippsen P."/>
        </authorList>
    </citation>
    <scope>GENOME REANNOTATION</scope>
    <source>
        <strain>ATCC 10895 / CBS 109.51 / FGSC 9923 / NRRL Y-1056</strain>
    </source>
</reference>
<accession>Q757M3</accession>
<feature type="chain" id="PRO_0000246644" description="Probable kinetochore protein NUF2">
    <location>
        <begin position="1"/>
        <end position="455"/>
    </location>
</feature>
<feature type="coiled-coil region" evidence="2">
    <location>
        <begin position="184"/>
        <end position="298"/>
    </location>
</feature>
<feature type="coiled-coil region" evidence="2">
    <location>
        <begin position="343"/>
        <end position="380"/>
    </location>
</feature>
<comment type="function">
    <text evidence="1">Acts as a component of the essential kinetochore-associated NDC80 complex, which is required for chromosome segregation and spindle checkpoint activity.</text>
</comment>
<comment type="subunit">
    <text evidence="1">Component of the NDC80 complex, which consists of NDC80, NUF2, SPC24 and SPC25.</text>
</comment>
<comment type="subcellular location">
    <subcellularLocation>
        <location evidence="1">Nucleus</location>
    </subcellularLocation>
    <subcellularLocation>
        <location evidence="1">Chromosome</location>
        <location evidence="1">Centromere</location>
        <location evidence="1">Kinetochore</location>
    </subcellularLocation>
    <text evidence="1">Associated with kinetochores.</text>
</comment>
<comment type="similarity">
    <text evidence="3">Belongs to the NUF2 family.</text>
</comment>
<protein>
    <recommendedName>
        <fullName>Probable kinetochore protein NUF2</fullName>
    </recommendedName>
</protein>
<organism>
    <name type="scientific">Eremothecium gossypii (strain ATCC 10895 / CBS 109.51 / FGSC 9923 / NRRL Y-1056)</name>
    <name type="common">Yeast</name>
    <name type="synonym">Ashbya gossypii</name>
    <dbReference type="NCBI Taxonomy" id="284811"/>
    <lineage>
        <taxon>Eukaryota</taxon>
        <taxon>Fungi</taxon>
        <taxon>Dikarya</taxon>
        <taxon>Ascomycota</taxon>
        <taxon>Saccharomycotina</taxon>
        <taxon>Saccharomycetes</taxon>
        <taxon>Saccharomycetales</taxon>
        <taxon>Saccharomycetaceae</taxon>
        <taxon>Eremothecium</taxon>
    </lineage>
</organism>
<name>NUF2_EREGS</name>
<proteinExistence type="inferred from homology"/>
<dbReference type="EMBL" id="AE016818">
    <property type="protein sequence ID" value="AAS52670.1"/>
    <property type="molecule type" value="Genomic_DNA"/>
</dbReference>
<dbReference type="RefSeq" id="NP_984846.1">
    <property type="nucleotide sequence ID" value="NM_210200.1"/>
</dbReference>
<dbReference type="SMR" id="Q757M3"/>
<dbReference type="FunCoup" id="Q757M3">
    <property type="interactions" value="355"/>
</dbReference>
<dbReference type="STRING" id="284811.Q757M3"/>
<dbReference type="EnsemblFungi" id="AAS52670">
    <property type="protein sequence ID" value="AAS52670"/>
    <property type="gene ID" value="AGOS_AEL015W"/>
</dbReference>
<dbReference type="GeneID" id="4621045"/>
<dbReference type="KEGG" id="ago:AGOS_AEL015W"/>
<dbReference type="eggNOG" id="KOG4438">
    <property type="taxonomic scope" value="Eukaryota"/>
</dbReference>
<dbReference type="HOGENOM" id="CLU_025461_2_0_1"/>
<dbReference type="InParanoid" id="Q757M3"/>
<dbReference type="OMA" id="YLKMEAH"/>
<dbReference type="OrthoDB" id="8194677at2759"/>
<dbReference type="Proteomes" id="UP000000591">
    <property type="component" value="Chromosome V"/>
</dbReference>
<dbReference type="GO" id="GO:0031262">
    <property type="term" value="C:Ndc80 complex"/>
    <property type="evidence" value="ECO:0000250"/>
    <property type="project" value="UniProtKB"/>
</dbReference>
<dbReference type="GO" id="GO:0005634">
    <property type="term" value="C:nucleus"/>
    <property type="evidence" value="ECO:0007669"/>
    <property type="project" value="UniProtKB-SubCell"/>
</dbReference>
<dbReference type="GO" id="GO:0005876">
    <property type="term" value="C:spindle microtubule"/>
    <property type="evidence" value="ECO:0007669"/>
    <property type="project" value="EnsemblFungi"/>
</dbReference>
<dbReference type="GO" id="GO:0005816">
    <property type="term" value="C:spindle pole body"/>
    <property type="evidence" value="ECO:0007669"/>
    <property type="project" value="EnsemblFungi"/>
</dbReference>
<dbReference type="GO" id="GO:0008017">
    <property type="term" value="F:microtubule binding"/>
    <property type="evidence" value="ECO:0000250"/>
    <property type="project" value="UniProtKB"/>
</dbReference>
<dbReference type="GO" id="GO:0044877">
    <property type="term" value="F:protein-containing complex binding"/>
    <property type="evidence" value="ECO:0000318"/>
    <property type="project" value="GO_Central"/>
</dbReference>
<dbReference type="GO" id="GO:0051315">
    <property type="term" value="P:attachment of mitotic spindle microtubules to kinetochore"/>
    <property type="evidence" value="ECO:0000318"/>
    <property type="project" value="GO_Central"/>
</dbReference>
<dbReference type="GO" id="GO:0051301">
    <property type="term" value="P:cell division"/>
    <property type="evidence" value="ECO:0007669"/>
    <property type="project" value="UniProtKB-KW"/>
</dbReference>
<dbReference type="GO" id="GO:0051383">
    <property type="term" value="P:kinetochore organization"/>
    <property type="evidence" value="ECO:0000318"/>
    <property type="project" value="GO_Central"/>
</dbReference>
<dbReference type="GO" id="GO:0045132">
    <property type="term" value="P:meiotic chromosome segregation"/>
    <property type="evidence" value="ECO:0000318"/>
    <property type="project" value="GO_Central"/>
</dbReference>
<dbReference type="GO" id="GO:0007052">
    <property type="term" value="P:mitotic spindle organization"/>
    <property type="evidence" value="ECO:0000318"/>
    <property type="project" value="GO_Central"/>
</dbReference>
<dbReference type="FunFam" id="1.10.418.60:FF:000004">
    <property type="entry name" value="Nuf2p"/>
    <property type="match status" value="1"/>
</dbReference>
<dbReference type="Gene3D" id="1.10.418.60">
    <property type="entry name" value="Ncd80 complex, Nuf2 subunit"/>
    <property type="match status" value="1"/>
</dbReference>
<dbReference type="InterPro" id="IPR005549">
    <property type="entry name" value="Kinetochore_Nuf2_N"/>
</dbReference>
<dbReference type="InterPro" id="IPR038275">
    <property type="entry name" value="Nuf2_N_sf"/>
</dbReference>
<dbReference type="PANTHER" id="PTHR21650:SF2">
    <property type="entry name" value="KINETOCHORE PROTEIN NUF2"/>
    <property type="match status" value="1"/>
</dbReference>
<dbReference type="PANTHER" id="PTHR21650">
    <property type="entry name" value="MEMBRALIN/KINETOCHORE PROTEIN NUF2"/>
    <property type="match status" value="1"/>
</dbReference>
<dbReference type="Pfam" id="PF03800">
    <property type="entry name" value="Nuf2"/>
    <property type="match status" value="1"/>
</dbReference>
<sequence length="455" mass="53091">MSSDNFPLLDIPELVTCLQECDFSLATIQNVERPSSQFVITLYKQIIDTFMGVSPDSLLEDSRNFVENGDTSEQEVYDASLVYHDTLKILALNKICYKFFLDIGVSDFNVMDLYKPDPHRTRRFLSAVANYARFREEAMLELDGDQHPDGVRYLEQTDKLLKELRLKFDANNLLHSRVQKYKEFQKSDDLEALESDNKNMESELRHLNQVQETLTVDYERYKAEKQRHLSELETLGYELIELESERDKLRKYSQTDAEVLRKGVRELSLLLEQQQVQLEKLEQKQKNLQISFETFQASTQELYEVLQIVSTDLQDSHLKESTLLDAKHKLMQNHKNLNNLLSAGIMAKITLLQEQLDSQKRKLAELELNTQAKESENSATLKRLRKQHTDDVLPEVRNIEQRYKTKVADTITNYESQMRNIKVDFDNEVALIENECSLLFNHIKNYMTTIGEKLG</sequence>
<keyword id="KW-0131">Cell cycle</keyword>
<keyword id="KW-0132">Cell division</keyword>
<keyword id="KW-0137">Centromere</keyword>
<keyword id="KW-0158">Chromosome</keyword>
<keyword id="KW-0175">Coiled coil</keyword>
<keyword id="KW-0995">Kinetochore</keyword>
<keyword id="KW-0498">Mitosis</keyword>
<keyword id="KW-0539">Nucleus</keyword>
<keyword id="KW-1185">Reference proteome</keyword>